<accession>Q9JIR1</accession>
<reference key="1">
    <citation type="journal article" date="2004" name="Nature">
        <title>Genome sequence of the Brown Norway rat yields insights into mammalian evolution.</title>
        <authorList>
            <person name="Gibbs R.A."/>
            <person name="Weinstock G.M."/>
            <person name="Metzker M.L."/>
            <person name="Muzny D.M."/>
            <person name="Sodergren E.J."/>
            <person name="Scherer S."/>
            <person name="Scott G."/>
            <person name="Steffen D."/>
            <person name="Worley K.C."/>
            <person name="Burch P.E."/>
            <person name="Okwuonu G."/>
            <person name="Hines S."/>
            <person name="Lewis L."/>
            <person name="Deramo C."/>
            <person name="Delgado O."/>
            <person name="Dugan-Rocha S."/>
            <person name="Miner G."/>
            <person name="Morgan M."/>
            <person name="Hawes A."/>
            <person name="Gill R."/>
            <person name="Holt R.A."/>
            <person name="Adams M.D."/>
            <person name="Amanatides P.G."/>
            <person name="Baden-Tillson H."/>
            <person name="Barnstead M."/>
            <person name="Chin S."/>
            <person name="Evans C.A."/>
            <person name="Ferriera S."/>
            <person name="Fosler C."/>
            <person name="Glodek A."/>
            <person name="Gu Z."/>
            <person name="Jennings D."/>
            <person name="Kraft C.L."/>
            <person name="Nguyen T."/>
            <person name="Pfannkoch C.M."/>
            <person name="Sitter C."/>
            <person name="Sutton G.G."/>
            <person name="Venter J.C."/>
            <person name="Woodage T."/>
            <person name="Smith D."/>
            <person name="Lee H.-M."/>
            <person name="Gustafson E."/>
            <person name="Cahill P."/>
            <person name="Kana A."/>
            <person name="Doucette-Stamm L."/>
            <person name="Weinstock K."/>
            <person name="Fechtel K."/>
            <person name="Weiss R.B."/>
            <person name="Dunn D.M."/>
            <person name="Green E.D."/>
            <person name="Blakesley R.W."/>
            <person name="Bouffard G.G."/>
            <person name="De Jong P.J."/>
            <person name="Osoegawa K."/>
            <person name="Zhu B."/>
            <person name="Marra M."/>
            <person name="Schein J."/>
            <person name="Bosdet I."/>
            <person name="Fjell C."/>
            <person name="Jones S."/>
            <person name="Krzywinski M."/>
            <person name="Mathewson C."/>
            <person name="Siddiqui A."/>
            <person name="Wye N."/>
            <person name="McPherson J."/>
            <person name="Zhao S."/>
            <person name="Fraser C.M."/>
            <person name="Shetty J."/>
            <person name="Shatsman S."/>
            <person name="Geer K."/>
            <person name="Chen Y."/>
            <person name="Abramzon S."/>
            <person name="Nierman W.C."/>
            <person name="Havlak P.H."/>
            <person name="Chen R."/>
            <person name="Durbin K.J."/>
            <person name="Egan A."/>
            <person name="Ren Y."/>
            <person name="Song X.-Z."/>
            <person name="Li B."/>
            <person name="Liu Y."/>
            <person name="Qin X."/>
            <person name="Cawley S."/>
            <person name="Cooney A.J."/>
            <person name="D'Souza L.M."/>
            <person name="Martin K."/>
            <person name="Wu J.Q."/>
            <person name="Gonzalez-Garay M.L."/>
            <person name="Jackson A.R."/>
            <person name="Kalafus K.J."/>
            <person name="McLeod M.P."/>
            <person name="Milosavljevic A."/>
            <person name="Virk D."/>
            <person name="Volkov A."/>
            <person name="Wheeler D.A."/>
            <person name="Zhang Z."/>
            <person name="Bailey J.A."/>
            <person name="Eichler E.E."/>
            <person name="Tuzun E."/>
            <person name="Birney E."/>
            <person name="Mongin E."/>
            <person name="Ureta-Vidal A."/>
            <person name="Woodwark C."/>
            <person name="Zdobnov E."/>
            <person name="Bork P."/>
            <person name="Suyama M."/>
            <person name="Torrents D."/>
            <person name="Alexandersson M."/>
            <person name="Trask B.J."/>
            <person name="Young J.M."/>
            <person name="Huang H."/>
            <person name="Wang H."/>
            <person name="Xing H."/>
            <person name="Daniels S."/>
            <person name="Gietzen D."/>
            <person name="Schmidt J."/>
            <person name="Stevens K."/>
            <person name="Vitt U."/>
            <person name="Wingrove J."/>
            <person name="Camara F."/>
            <person name="Mar Alba M."/>
            <person name="Abril J.F."/>
            <person name="Guigo R."/>
            <person name="Smit A."/>
            <person name="Dubchak I."/>
            <person name="Rubin E.M."/>
            <person name="Couronne O."/>
            <person name="Poliakov A."/>
            <person name="Huebner N."/>
            <person name="Ganten D."/>
            <person name="Goesele C."/>
            <person name="Hummel O."/>
            <person name="Kreitler T."/>
            <person name="Lee Y.-A."/>
            <person name="Monti J."/>
            <person name="Schulz H."/>
            <person name="Zimdahl H."/>
            <person name="Himmelbauer H."/>
            <person name="Lehrach H."/>
            <person name="Jacob H.J."/>
            <person name="Bromberg S."/>
            <person name="Gullings-Handley J."/>
            <person name="Jensen-Seaman M.I."/>
            <person name="Kwitek A.E."/>
            <person name="Lazar J."/>
            <person name="Pasko D."/>
            <person name="Tonellato P.J."/>
            <person name="Twigger S."/>
            <person name="Ponting C.P."/>
            <person name="Duarte J.M."/>
            <person name="Rice S."/>
            <person name="Goodstadt L."/>
            <person name="Beatson S.A."/>
            <person name="Emes R.D."/>
            <person name="Winter E.E."/>
            <person name="Webber C."/>
            <person name="Brandt P."/>
            <person name="Nyakatura G."/>
            <person name="Adetobi M."/>
            <person name="Chiaromonte F."/>
            <person name="Elnitski L."/>
            <person name="Eswara P."/>
            <person name="Hardison R.C."/>
            <person name="Hou M."/>
            <person name="Kolbe D."/>
            <person name="Makova K."/>
            <person name="Miller W."/>
            <person name="Nekrutenko A."/>
            <person name="Riemer C."/>
            <person name="Schwartz S."/>
            <person name="Taylor J."/>
            <person name="Yang S."/>
            <person name="Zhang Y."/>
            <person name="Lindpaintner K."/>
            <person name="Andrews T.D."/>
            <person name="Caccamo M."/>
            <person name="Clamp M."/>
            <person name="Clarke L."/>
            <person name="Curwen V."/>
            <person name="Durbin R.M."/>
            <person name="Eyras E."/>
            <person name="Searle S.M."/>
            <person name="Cooper G.M."/>
            <person name="Batzoglou S."/>
            <person name="Brudno M."/>
            <person name="Sidow A."/>
            <person name="Stone E.A."/>
            <person name="Payseur B.A."/>
            <person name="Bourque G."/>
            <person name="Lopez-Otin C."/>
            <person name="Puente X.S."/>
            <person name="Chakrabarti K."/>
            <person name="Chatterji S."/>
            <person name="Dewey C."/>
            <person name="Pachter L."/>
            <person name="Bray N."/>
            <person name="Yap V.B."/>
            <person name="Caspi A."/>
            <person name="Tesler G."/>
            <person name="Pevzner P.A."/>
            <person name="Haussler D."/>
            <person name="Roskin K.M."/>
            <person name="Baertsch R."/>
            <person name="Clawson H."/>
            <person name="Furey T.S."/>
            <person name="Hinrichs A.S."/>
            <person name="Karolchik D."/>
            <person name="Kent W.J."/>
            <person name="Rosenbloom K.R."/>
            <person name="Trumbower H."/>
            <person name="Weirauch M."/>
            <person name="Cooper D.N."/>
            <person name="Stenson P.D."/>
            <person name="Ma B."/>
            <person name="Brent M."/>
            <person name="Arumugam M."/>
            <person name="Shteynberg D."/>
            <person name="Copley R.R."/>
            <person name="Taylor M.S."/>
            <person name="Riethman H."/>
            <person name="Mudunuri U."/>
            <person name="Peterson J."/>
            <person name="Guyer M."/>
            <person name="Felsenfeld A."/>
            <person name="Old S."/>
            <person name="Mockrin S."/>
            <person name="Collins F.S."/>
        </authorList>
    </citation>
    <scope>NUCLEOTIDE SEQUENCE [LARGE SCALE GENOMIC DNA]</scope>
    <source>
        <strain>Brown Norway</strain>
    </source>
</reference>
<reference key="2">
    <citation type="journal article" date="2000" name="J. Biol. Chem.">
        <title>The RIM/NIM family of neuronal C2 domain proteins. Interactions with Rab3 and a new class of Src homology 3 domain proteins.</title>
        <authorList>
            <person name="Wang Y."/>
            <person name="Sugita S."/>
            <person name="Suedhof T.C."/>
        </authorList>
    </citation>
    <scope>NUCLEOTIDE SEQUENCE OF 785-1049</scope>
    <scope>INTERACTION WITH RIMS1 AND RIMS2</scope>
</reference>
<reference key="3">
    <citation type="journal article" date="2012" name="Nat. Commun.">
        <title>Quantitative maps of protein phosphorylation sites across 14 different rat organs and tissues.</title>
        <authorList>
            <person name="Lundby A."/>
            <person name="Secher A."/>
            <person name="Lage K."/>
            <person name="Nordsborg N.B."/>
            <person name="Dmytriyev A."/>
            <person name="Lundby C."/>
            <person name="Olsen J.V."/>
        </authorList>
    </citation>
    <scope>PHOSPHORYLATION [LARGE SCALE ANALYSIS] AT SER-701; SER-709; SER-832; SER-839 AND THR-841</scope>
    <scope>IDENTIFICATION BY MASS SPECTROMETRY [LARGE SCALE ANALYSIS]</scope>
</reference>
<gene>
    <name type="primary">Rimbp2</name>
    <name type="synonym">Rbp2</name>
</gene>
<dbReference type="EMBL" id="AABR03082106">
    <property type="status" value="NOT_ANNOTATED_CDS"/>
    <property type="molecule type" value="Genomic_DNA"/>
</dbReference>
<dbReference type="EMBL" id="AABR03082706">
    <property type="status" value="NOT_ANNOTATED_CDS"/>
    <property type="molecule type" value="Genomic_DNA"/>
</dbReference>
<dbReference type="EMBL" id="AABR03082432">
    <property type="status" value="NOT_ANNOTATED_CDS"/>
    <property type="molecule type" value="Genomic_DNA"/>
</dbReference>
<dbReference type="EMBL" id="AF199336">
    <property type="protein sequence ID" value="AAF81658.1"/>
    <property type="molecule type" value="mRNA"/>
</dbReference>
<dbReference type="SMR" id="Q9JIR1"/>
<dbReference type="CORUM" id="Q9JIR1"/>
<dbReference type="FunCoup" id="Q9JIR1">
    <property type="interactions" value="986"/>
</dbReference>
<dbReference type="IntAct" id="Q9JIR1">
    <property type="interactions" value="2"/>
</dbReference>
<dbReference type="STRING" id="10116.ENSRNOP00000073070"/>
<dbReference type="iPTMnet" id="Q9JIR1"/>
<dbReference type="PhosphoSitePlus" id="Q9JIR1"/>
<dbReference type="PaxDb" id="10116-ENSRNOP00000059643"/>
<dbReference type="AGR" id="RGD:708533"/>
<dbReference type="RGD" id="708533">
    <property type="gene designation" value="Rimbp2"/>
</dbReference>
<dbReference type="eggNOG" id="KOG3632">
    <property type="taxonomic scope" value="Eukaryota"/>
</dbReference>
<dbReference type="InParanoid" id="Q9JIR1"/>
<dbReference type="CD-CODE" id="F9F240AC">
    <property type="entry name" value="Presynaptic clusters"/>
</dbReference>
<dbReference type="PRO" id="PR:Q9JIR1"/>
<dbReference type="Proteomes" id="UP000002494">
    <property type="component" value="Unplaced"/>
</dbReference>
<dbReference type="GO" id="GO:0044305">
    <property type="term" value="C:calyx of Held"/>
    <property type="evidence" value="ECO:0000266"/>
    <property type="project" value="RGD"/>
</dbReference>
<dbReference type="GO" id="GO:0098978">
    <property type="term" value="C:glutamatergic synapse"/>
    <property type="evidence" value="ECO:0000266"/>
    <property type="project" value="RGD"/>
</dbReference>
<dbReference type="GO" id="GO:0005886">
    <property type="term" value="C:plasma membrane"/>
    <property type="evidence" value="ECO:0007669"/>
    <property type="project" value="UniProtKB-SubCell"/>
</dbReference>
<dbReference type="GO" id="GO:0098831">
    <property type="term" value="C:presynaptic active zone cytoplasmic component"/>
    <property type="evidence" value="ECO:0000266"/>
    <property type="project" value="RGD"/>
</dbReference>
<dbReference type="GO" id="GO:0098882">
    <property type="term" value="F:structural constituent of presynaptic active zone"/>
    <property type="evidence" value="ECO:0000266"/>
    <property type="project" value="RGD"/>
</dbReference>
<dbReference type="GO" id="GO:0099626">
    <property type="term" value="F:voltage-gated calcium channel activity involved in regulation of presynaptic cytosolic calcium levels"/>
    <property type="evidence" value="ECO:0000266"/>
    <property type="project" value="RGD"/>
</dbReference>
<dbReference type="GO" id="GO:0099508">
    <property type="term" value="F:voltage-gated monoatomic ion channel activity involved in regulation of presynaptic membrane potential"/>
    <property type="evidence" value="ECO:0000266"/>
    <property type="project" value="RGD"/>
</dbReference>
<dbReference type="GO" id="GO:0007274">
    <property type="term" value="P:neuromuscular synaptic transmission"/>
    <property type="evidence" value="ECO:0000318"/>
    <property type="project" value="GO_Central"/>
</dbReference>
<dbReference type="GO" id="GO:0150037">
    <property type="term" value="P:regulation of calcium-dependent activation of synaptic vesicle fusion"/>
    <property type="evidence" value="ECO:0000266"/>
    <property type="project" value="RGD"/>
</dbReference>
<dbReference type="GO" id="GO:0099505">
    <property type="term" value="P:regulation of presynaptic membrane potential"/>
    <property type="evidence" value="ECO:0000266"/>
    <property type="project" value="RGD"/>
</dbReference>
<dbReference type="CDD" id="cd00063">
    <property type="entry name" value="FN3"/>
    <property type="match status" value="3"/>
</dbReference>
<dbReference type="CDD" id="cd12014">
    <property type="entry name" value="SH3_RIM-BP_1"/>
    <property type="match status" value="1"/>
</dbReference>
<dbReference type="CDD" id="cd12012">
    <property type="entry name" value="SH3_RIM-BP_2"/>
    <property type="match status" value="1"/>
</dbReference>
<dbReference type="CDD" id="cd12013">
    <property type="entry name" value="SH3_RIM-BP_3"/>
    <property type="match status" value="1"/>
</dbReference>
<dbReference type="FunFam" id="2.30.30.40:FF:000023">
    <property type="entry name" value="RIMS-binding protein 2 isoform F"/>
    <property type="match status" value="1"/>
</dbReference>
<dbReference type="FunFam" id="2.30.30.40:FF:000006">
    <property type="entry name" value="RIMS-binding protein 2 isoform X1"/>
    <property type="match status" value="1"/>
</dbReference>
<dbReference type="FunFam" id="2.60.40.10:FF:000072">
    <property type="entry name" value="RIMS-binding protein 2 isoform X1"/>
    <property type="match status" value="1"/>
</dbReference>
<dbReference type="FunFam" id="2.60.40.10:FF:000643">
    <property type="entry name" value="RIMS-binding protein 2 isoform X1"/>
    <property type="match status" value="1"/>
</dbReference>
<dbReference type="FunFam" id="2.30.30.40:FF:000016">
    <property type="entry name" value="RIMS-binding protein 2 isoform X2"/>
    <property type="match status" value="1"/>
</dbReference>
<dbReference type="Gene3D" id="2.60.40.10">
    <property type="entry name" value="Immunoglobulins"/>
    <property type="match status" value="3"/>
</dbReference>
<dbReference type="Gene3D" id="2.30.30.40">
    <property type="entry name" value="SH3 Domains"/>
    <property type="match status" value="3"/>
</dbReference>
<dbReference type="InterPro" id="IPR003961">
    <property type="entry name" value="FN3_dom"/>
</dbReference>
<dbReference type="InterPro" id="IPR036116">
    <property type="entry name" value="FN3_sf"/>
</dbReference>
<dbReference type="InterPro" id="IPR013783">
    <property type="entry name" value="Ig-like_fold"/>
</dbReference>
<dbReference type="InterPro" id="IPR035753">
    <property type="entry name" value="RIM-BP_SH3_2"/>
</dbReference>
<dbReference type="InterPro" id="IPR035755">
    <property type="entry name" value="RIM-BP_SH3_3"/>
</dbReference>
<dbReference type="InterPro" id="IPR040325">
    <property type="entry name" value="RIMBP1/2/3"/>
</dbReference>
<dbReference type="InterPro" id="IPR036028">
    <property type="entry name" value="SH3-like_dom_sf"/>
</dbReference>
<dbReference type="InterPro" id="IPR001452">
    <property type="entry name" value="SH3_domain"/>
</dbReference>
<dbReference type="PANTHER" id="PTHR14234">
    <property type="entry name" value="RIM BINDING PROTEIN-RELATED"/>
    <property type="match status" value="1"/>
</dbReference>
<dbReference type="PANTHER" id="PTHR14234:SF18">
    <property type="entry name" value="RIMS-BINDING PROTEIN 2"/>
    <property type="match status" value="1"/>
</dbReference>
<dbReference type="Pfam" id="PF00041">
    <property type="entry name" value="fn3"/>
    <property type="match status" value="1"/>
</dbReference>
<dbReference type="Pfam" id="PF07653">
    <property type="entry name" value="SH3_2"/>
    <property type="match status" value="1"/>
</dbReference>
<dbReference type="Pfam" id="PF14604">
    <property type="entry name" value="SH3_9"/>
    <property type="match status" value="2"/>
</dbReference>
<dbReference type="PRINTS" id="PR00452">
    <property type="entry name" value="SH3DOMAIN"/>
</dbReference>
<dbReference type="SMART" id="SM00060">
    <property type="entry name" value="FN3"/>
    <property type="match status" value="3"/>
</dbReference>
<dbReference type="SMART" id="SM00326">
    <property type="entry name" value="SH3"/>
    <property type="match status" value="3"/>
</dbReference>
<dbReference type="SUPFAM" id="SSF49265">
    <property type="entry name" value="Fibronectin type III"/>
    <property type="match status" value="2"/>
</dbReference>
<dbReference type="SUPFAM" id="SSF50044">
    <property type="entry name" value="SH3-domain"/>
    <property type="match status" value="3"/>
</dbReference>
<dbReference type="PROSITE" id="PS50853">
    <property type="entry name" value="FN3"/>
    <property type="match status" value="3"/>
</dbReference>
<dbReference type="PROSITE" id="PS50002">
    <property type="entry name" value="SH3"/>
    <property type="match status" value="3"/>
</dbReference>
<name>RIMB2_RAT</name>
<sequence length="1049" mass="115614">MREAAERRQQLELEHEQALAILNAKQQEIQLLQQSKVRELEEKCRVQSEQFNLLSRDLEKFRQHAGSIDLLGSNSVALLDVPLAPGKPFSQYMNGLATSIHKGHEGPTGHYSVIGDYIPLSGDKLESPCVKPSFLLRSSSPRCRFESEMDDDRSSNKSKHSSSGKVHLCVARYSYNPFDGPNENPEAELPLTAGKYLYVYGDMDEDGFYEGELLDGQRGLVPSNFVDFIQDNESRFAGTLGSEQDQNFLNHSGISLERDSILHLHSPTQVDSGITDNGGGTLDVNIDDIGEDIVPYPRKITLIKQLAKSVIVGWEPPAVPPGWGTVSSYNVLVDKETRMSLALGRRTKALIEKLNTAACTYRISVQCVTSRGNSDELQCTLLVGKDVVVAPSQLRVDNITQISAQLSWLPTNSNYSHIIFLNEEELDIVKAARYKYQFFNLRPNMAYKVKVLAQPHQMPWQLPLEQREKDEACVEFSTLPAGPPAPPQDVTVQAGATTASVQVSWKPPALTPTGLSNGANVTGYGVYAKGQRVAEVIAPTANGAAVELVRLRSLEAKAVSVRTLSAQGESMDSALAAIPPDLLVPPAPHPRTAPPPKPLTSDMDTKDLGPHVKVDESWEQSRPPGPAHGHMLEPPDMHSTGPGRRSPSPSRILPQPQGAPVSTTVAKAMAREAAQRVAETSKLEKRSLFLEQSSAGPYANSDEEDGYASPEVKRRGTSVDDFLKGSELGQQPHCCHGDEYHTESSRGSDLSDIMEEDEEELYSEMQLEDGGRRRPSGTSHNALKILGNSALMGRGDRMEHVSRRYSHSGGGPQRHRPMAPSIDEYTGRDHLSPDFYDESETDPGAEELPARIFVALFDYDPLTMSPNPDAAEEELPFKEGQIIKVYGDKDADGFYRGETCARLGLIPCNMVSEIHADDEEMMDQLLRQGFLPLNTPVEKIERSRRSGRGHSVPTRRMVALYDYDPRESSPNVDVEAELLFCTGDIITVFGEIDEDGFYYGELNGQKGLVPSNFLEEVPDDVEVHLSDAPPHYSHDPPMRTKAKRVSQPP</sequence>
<feature type="chain" id="PRO_0000221385" description="RIMS-binding protein 2">
    <location>
        <begin position="1"/>
        <end position="1049"/>
    </location>
</feature>
<feature type="domain" description="SH3 1" evidence="2">
    <location>
        <begin position="164"/>
        <end position="231"/>
    </location>
</feature>
<feature type="domain" description="Fibronectin type-III 1" evidence="3">
    <location>
        <begin position="294"/>
        <end position="387"/>
    </location>
</feature>
<feature type="domain" description="Fibronectin type-III 2" evidence="3">
    <location>
        <begin position="390"/>
        <end position="471"/>
    </location>
</feature>
<feature type="domain" description="Fibronectin type-III 3" evidence="3">
    <location>
        <begin position="486"/>
        <end position="587"/>
    </location>
</feature>
<feature type="domain" description="SH3 2" evidence="2">
    <location>
        <begin position="848"/>
        <end position="916"/>
    </location>
</feature>
<feature type="domain" description="SH3 3" evidence="2">
    <location>
        <begin position="952"/>
        <end position="1019"/>
    </location>
</feature>
<feature type="region of interest" description="Disordered" evidence="4">
    <location>
        <begin position="580"/>
        <end position="664"/>
    </location>
</feature>
<feature type="region of interest" description="Disordered" evidence="4">
    <location>
        <begin position="694"/>
        <end position="714"/>
    </location>
</feature>
<feature type="region of interest" description="Disordered" evidence="4">
    <location>
        <begin position="728"/>
        <end position="750"/>
    </location>
</feature>
<feature type="region of interest" description="Disordered" evidence="4">
    <location>
        <begin position="1024"/>
        <end position="1049"/>
    </location>
</feature>
<feature type="compositionally biased region" description="Pro residues" evidence="4">
    <location>
        <begin position="582"/>
        <end position="598"/>
    </location>
</feature>
<feature type="compositionally biased region" description="Basic and acidic residues" evidence="4">
    <location>
        <begin position="603"/>
        <end position="616"/>
    </location>
</feature>
<feature type="compositionally biased region" description="Low complexity" evidence="4">
    <location>
        <begin position="641"/>
        <end position="651"/>
    </location>
</feature>
<feature type="compositionally biased region" description="Basic and acidic residues" evidence="4">
    <location>
        <begin position="735"/>
        <end position="746"/>
    </location>
</feature>
<feature type="compositionally biased region" description="Basic residues" evidence="4">
    <location>
        <begin position="1040"/>
        <end position="1049"/>
    </location>
</feature>
<feature type="modified residue" description="Phosphoserine" evidence="7">
    <location>
        <position position="701"/>
    </location>
</feature>
<feature type="modified residue" description="Phosphoserine" evidence="7">
    <location>
        <position position="709"/>
    </location>
</feature>
<feature type="modified residue" description="Phosphoserine" evidence="7">
    <location>
        <position position="832"/>
    </location>
</feature>
<feature type="modified residue" description="Phosphoserine" evidence="7">
    <location>
        <position position="839"/>
    </location>
</feature>
<feature type="modified residue" description="Phosphothreonine" evidence="7">
    <location>
        <position position="841"/>
    </location>
</feature>
<proteinExistence type="evidence at protein level"/>
<comment type="function">
    <text evidence="1">Plays a role in the synaptic transmission as bifunctional linker that interacts simultaneously with RIMS1, RIMS2, CACNA1D and CACNA1B.</text>
</comment>
<comment type="subunit">
    <text evidence="1 5">Interacts with CACNA1D and CACNA1B, and potentially with other Ca(2+) channel alpha-1 isoforms (By similarity). Interacts with RIMS1 and RIMS2.</text>
</comment>
<comment type="subcellular location">
    <subcellularLocation>
        <location evidence="1">Cell membrane</location>
    </subcellularLocation>
    <subcellularLocation>
        <location evidence="1">Synapse</location>
    </subcellularLocation>
    <text evidence="1">Synaptic plasma membrane.</text>
</comment>
<comment type="domain">
    <text evidence="1">The SH3 domains mediate binding to a proline-rich motif in RIMS1, RIMS2, CACNA1D and CACNA1B.</text>
</comment>
<comment type="similarity">
    <text evidence="6">Belongs to the RIMBP family.</text>
</comment>
<protein>
    <recommendedName>
        <fullName>RIMS-binding protein 2</fullName>
        <shortName>RIM-BP2</shortName>
    </recommendedName>
</protein>
<evidence type="ECO:0000250" key="1"/>
<evidence type="ECO:0000255" key="2">
    <source>
        <dbReference type="PROSITE-ProRule" id="PRU00192"/>
    </source>
</evidence>
<evidence type="ECO:0000255" key="3">
    <source>
        <dbReference type="PROSITE-ProRule" id="PRU00316"/>
    </source>
</evidence>
<evidence type="ECO:0000256" key="4">
    <source>
        <dbReference type="SAM" id="MobiDB-lite"/>
    </source>
</evidence>
<evidence type="ECO:0000269" key="5">
    <source>
    </source>
</evidence>
<evidence type="ECO:0000305" key="6"/>
<evidence type="ECO:0007744" key="7">
    <source>
    </source>
</evidence>
<keyword id="KW-1003">Cell membrane</keyword>
<keyword id="KW-0472">Membrane</keyword>
<keyword id="KW-0597">Phosphoprotein</keyword>
<keyword id="KW-1185">Reference proteome</keyword>
<keyword id="KW-0677">Repeat</keyword>
<keyword id="KW-0728">SH3 domain</keyword>
<keyword id="KW-0770">Synapse</keyword>
<organism>
    <name type="scientific">Rattus norvegicus</name>
    <name type="common">Rat</name>
    <dbReference type="NCBI Taxonomy" id="10116"/>
    <lineage>
        <taxon>Eukaryota</taxon>
        <taxon>Metazoa</taxon>
        <taxon>Chordata</taxon>
        <taxon>Craniata</taxon>
        <taxon>Vertebrata</taxon>
        <taxon>Euteleostomi</taxon>
        <taxon>Mammalia</taxon>
        <taxon>Eutheria</taxon>
        <taxon>Euarchontoglires</taxon>
        <taxon>Glires</taxon>
        <taxon>Rodentia</taxon>
        <taxon>Myomorpha</taxon>
        <taxon>Muroidea</taxon>
        <taxon>Muridae</taxon>
        <taxon>Murinae</taxon>
        <taxon>Rattus</taxon>
    </lineage>
</organism>